<evidence type="ECO:0000255" key="1">
    <source>
        <dbReference type="PROSITE-ProRule" id="PRU00055"/>
    </source>
</evidence>
<evidence type="ECO:0000256" key="2">
    <source>
        <dbReference type="SAM" id="MobiDB-lite"/>
    </source>
</evidence>
<evidence type="ECO:0000269" key="3">
    <source>
    </source>
</evidence>
<evidence type="ECO:0000269" key="4">
    <source>
    </source>
</evidence>
<evidence type="ECO:0007744" key="5">
    <source>
    </source>
</evidence>
<evidence type="ECO:0007744" key="6">
    <source>
    </source>
</evidence>
<evidence type="ECO:0007744" key="7">
    <source>
    </source>
</evidence>
<accession>Q12753</accession>
<accession>D6W419</accession>
<feature type="chain" id="PRO_0000194933" description="Transcriptional activator HAA1">
    <location>
        <begin position="1"/>
        <end position="694"/>
    </location>
</feature>
<feature type="DNA-binding region" description="Copper-fist" evidence="1">
    <location>
        <begin position="1"/>
        <end position="40"/>
    </location>
</feature>
<feature type="region of interest" description="Disordered" evidence="2">
    <location>
        <begin position="104"/>
        <end position="128"/>
    </location>
</feature>
<feature type="region of interest" description="Disordered" evidence="2">
    <location>
        <begin position="209"/>
        <end position="240"/>
    </location>
</feature>
<feature type="region of interest" description="Disordered" evidence="2">
    <location>
        <begin position="332"/>
        <end position="388"/>
    </location>
</feature>
<feature type="region of interest" description="Disordered" evidence="2">
    <location>
        <begin position="479"/>
        <end position="514"/>
    </location>
</feature>
<feature type="region of interest" description="Disordered" evidence="2">
    <location>
        <begin position="566"/>
        <end position="588"/>
    </location>
</feature>
<feature type="region of interest" description="Disordered" evidence="2">
    <location>
        <begin position="650"/>
        <end position="677"/>
    </location>
</feature>
<feature type="compositionally biased region" description="Polar residues" evidence="2">
    <location>
        <begin position="111"/>
        <end position="126"/>
    </location>
</feature>
<feature type="compositionally biased region" description="Polar residues" evidence="2">
    <location>
        <begin position="336"/>
        <end position="349"/>
    </location>
</feature>
<feature type="compositionally biased region" description="Low complexity" evidence="2">
    <location>
        <begin position="350"/>
        <end position="378"/>
    </location>
</feature>
<feature type="compositionally biased region" description="Polar residues" evidence="2">
    <location>
        <begin position="566"/>
        <end position="577"/>
    </location>
</feature>
<feature type="compositionally biased region" description="Polar residues" evidence="2">
    <location>
        <begin position="664"/>
        <end position="677"/>
    </location>
</feature>
<feature type="binding site" evidence="1">
    <location>
        <position position="11"/>
    </location>
    <ligand>
        <name>Zn(2+)</name>
        <dbReference type="ChEBI" id="CHEBI:29105"/>
    </ligand>
</feature>
<feature type="binding site" evidence="1">
    <location>
        <position position="14"/>
    </location>
    <ligand>
        <name>Zn(2+)</name>
        <dbReference type="ChEBI" id="CHEBI:29105"/>
    </ligand>
</feature>
<feature type="binding site" evidence="1">
    <location>
        <position position="23"/>
    </location>
    <ligand>
        <name>Zn(2+)</name>
        <dbReference type="ChEBI" id="CHEBI:29105"/>
    </ligand>
</feature>
<feature type="binding site" evidence="1">
    <location>
        <position position="25"/>
    </location>
    <ligand>
        <name>Zn(2+)</name>
        <dbReference type="ChEBI" id="CHEBI:29105"/>
    </ligand>
</feature>
<feature type="modified residue" description="Phosphoserine" evidence="6">
    <location>
        <position position="125"/>
    </location>
</feature>
<feature type="modified residue" description="Phosphoserine" evidence="7">
    <location>
        <position position="231"/>
    </location>
</feature>
<feature type="modified residue" description="Phosphoserine" evidence="5 6">
    <location>
        <position position="241"/>
    </location>
</feature>
<feature type="modified residue" description="Phosphoserine" evidence="7">
    <location>
        <position position="291"/>
    </location>
</feature>
<protein>
    <recommendedName>
        <fullName>Transcriptional activator HAA1</fullName>
    </recommendedName>
</protein>
<gene>
    <name type="primary">HAA1</name>
    <name type="ordered locus">YPR008W</name>
    <name type="ORF">LPZ8W</name>
    <name type="ORF">YP9531.01</name>
    <name type="ORF">YP9723.08</name>
</gene>
<organism>
    <name type="scientific">Saccharomyces cerevisiae (strain ATCC 204508 / S288c)</name>
    <name type="common">Baker's yeast</name>
    <dbReference type="NCBI Taxonomy" id="559292"/>
    <lineage>
        <taxon>Eukaryota</taxon>
        <taxon>Fungi</taxon>
        <taxon>Dikarya</taxon>
        <taxon>Ascomycota</taxon>
        <taxon>Saccharomycotina</taxon>
        <taxon>Saccharomycetes</taxon>
        <taxon>Saccharomycetales</taxon>
        <taxon>Saccharomycetaceae</taxon>
        <taxon>Saccharomyces</taxon>
    </lineage>
</organism>
<comment type="function">
    <text evidence="3">Regulates the transcription of a set of genes, many of which encode membrane proteins. Among the genes regulated are YGR138C and YRO2. Does not seem to be dependent on copper.</text>
</comment>
<comment type="interaction">
    <interactant intactId="EBI-8118">
        <id>Q12753</id>
    </interactant>
    <interactant intactId="EBI-7179">
        <id>P11710</id>
        <label>FUS1</label>
    </interactant>
    <organismsDiffer>false</organismsDiffer>
    <experiments>3</experiments>
</comment>
<comment type="subcellular location">
    <subcellularLocation>
        <location evidence="3">Nucleus</location>
    </subcellularLocation>
</comment>
<comment type="miscellaneous">
    <text evidence="4">Present with 339 molecules/cell in log phase SD medium.</text>
</comment>
<proteinExistence type="evidence at protein level"/>
<dbReference type="EMBL" id="U31900">
    <property type="protein sequence ID" value="AAA97587.1"/>
    <property type="molecule type" value="Genomic_DNA"/>
</dbReference>
<dbReference type="EMBL" id="Z71255">
    <property type="protein sequence ID" value="CAA95048.1"/>
    <property type="molecule type" value="Genomic_DNA"/>
</dbReference>
<dbReference type="EMBL" id="Z48951">
    <property type="protein sequence ID" value="CAA88786.1"/>
    <property type="molecule type" value="Genomic_DNA"/>
</dbReference>
<dbReference type="EMBL" id="Z49919">
    <property type="protein sequence ID" value="CAA90152.1"/>
    <property type="molecule type" value="Genomic_DNA"/>
</dbReference>
<dbReference type="EMBL" id="AY692804">
    <property type="protein sequence ID" value="AAT92823.1"/>
    <property type="molecule type" value="Genomic_DNA"/>
</dbReference>
<dbReference type="EMBL" id="BK006949">
    <property type="protein sequence ID" value="DAA11435.1"/>
    <property type="molecule type" value="Genomic_DNA"/>
</dbReference>
<dbReference type="PIR" id="S59753">
    <property type="entry name" value="S59753"/>
</dbReference>
<dbReference type="RefSeq" id="NP_015333.1">
    <property type="nucleotide sequence ID" value="NM_001184105.1"/>
</dbReference>
<dbReference type="SMR" id="Q12753"/>
<dbReference type="BioGRID" id="36186">
    <property type="interactions" value="105"/>
</dbReference>
<dbReference type="DIP" id="DIP-1462N"/>
<dbReference type="FunCoup" id="Q12753">
    <property type="interactions" value="770"/>
</dbReference>
<dbReference type="IntAct" id="Q12753">
    <property type="interactions" value="35"/>
</dbReference>
<dbReference type="MINT" id="Q12753"/>
<dbReference type="STRING" id="4932.YPR008W"/>
<dbReference type="iPTMnet" id="Q12753"/>
<dbReference type="PaxDb" id="4932-YPR008W"/>
<dbReference type="PeptideAtlas" id="Q12753"/>
<dbReference type="EnsemblFungi" id="YPR008W_mRNA">
    <property type="protein sequence ID" value="YPR008W"/>
    <property type="gene ID" value="YPR008W"/>
</dbReference>
<dbReference type="GeneID" id="856117"/>
<dbReference type="KEGG" id="sce:YPR008W"/>
<dbReference type="AGR" id="SGD:S000006212"/>
<dbReference type="SGD" id="S000006212">
    <property type="gene designation" value="HAA1"/>
</dbReference>
<dbReference type="VEuPathDB" id="FungiDB:YPR008W"/>
<dbReference type="eggNOG" id="ENOG502S7CA">
    <property type="taxonomic scope" value="Eukaryota"/>
</dbReference>
<dbReference type="GeneTree" id="ENSGT00940000176728"/>
<dbReference type="HOGENOM" id="CLU_022338_0_0_1"/>
<dbReference type="InParanoid" id="Q12753"/>
<dbReference type="OMA" id="HHPANEY"/>
<dbReference type="OrthoDB" id="5600085at2759"/>
<dbReference type="BioCyc" id="YEAST:G3O-34170-MONOMER"/>
<dbReference type="BioGRID-ORCS" id="856117">
    <property type="hits" value="1 hit in 13 CRISPR screens"/>
</dbReference>
<dbReference type="PRO" id="PR:Q12753"/>
<dbReference type="Proteomes" id="UP000002311">
    <property type="component" value="Chromosome XVI"/>
</dbReference>
<dbReference type="RNAct" id="Q12753">
    <property type="molecule type" value="protein"/>
</dbReference>
<dbReference type="GO" id="GO:0005737">
    <property type="term" value="C:cytoplasm"/>
    <property type="evidence" value="ECO:0007005"/>
    <property type="project" value="SGD"/>
</dbReference>
<dbReference type="GO" id="GO:0005634">
    <property type="term" value="C:nucleus"/>
    <property type="evidence" value="ECO:0000314"/>
    <property type="project" value="SGD"/>
</dbReference>
<dbReference type="GO" id="GO:0005507">
    <property type="term" value="F:copper ion binding"/>
    <property type="evidence" value="ECO:0000318"/>
    <property type="project" value="GO_Central"/>
</dbReference>
<dbReference type="GO" id="GO:0000981">
    <property type="term" value="F:DNA-binding transcription factor activity, RNA polymerase II-specific"/>
    <property type="evidence" value="ECO:0000314"/>
    <property type="project" value="SGD"/>
</dbReference>
<dbReference type="GO" id="GO:0000978">
    <property type="term" value="F:RNA polymerase II cis-regulatory region sequence-specific DNA binding"/>
    <property type="evidence" value="ECO:0000318"/>
    <property type="project" value="GO_Central"/>
</dbReference>
<dbReference type="GO" id="GO:0071468">
    <property type="term" value="P:cellular response to acidic pH"/>
    <property type="evidence" value="ECO:0000315"/>
    <property type="project" value="SGD"/>
</dbReference>
<dbReference type="GO" id="GO:0033554">
    <property type="term" value="P:cellular response to stress"/>
    <property type="evidence" value="ECO:0000315"/>
    <property type="project" value="SGD"/>
</dbReference>
<dbReference type="GO" id="GO:0006878">
    <property type="term" value="P:intracellular copper ion homeostasis"/>
    <property type="evidence" value="ECO:0000318"/>
    <property type="project" value="GO_Central"/>
</dbReference>
<dbReference type="GO" id="GO:0006879">
    <property type="term" value="P:intracellular iron ion homeostasis"/>
    <property type="evidence" value="ECO:0000318"/>
    <property type="project" value="GO_Central"/>
</dbReference>
<dbReference type="GO" id="GO:0045944">
    <property type="term" value="P:positive regulation of transcription by RNA polymerase II"/>
    <property type="evidence" value="ECO:0000314"/>
    <property type="project" value="SGD"/>
</dbReference>
<dbReference type="FunFam" id="3.90.430.10:FF:000001">
    <property type="entry name" value="Copper fist DNA-binding protein"/>
    <property type="match status" value="1"/>
</dbReference>
<dbReference type="Gene3D" id="3.90.430.10">
    <property type="entry name" value="Copper fist DNA-binding domain"/>
    <property type="match status" value="1"/>
</dbReference>
<dbReference type="InterPro" id="IPR051763">
    <property type="entry name" value="Copper_Homeo_Regul"/>
</dbReference>
<dbReference type="InterPro" id="IPR001083">
    <property type="entry name" value="Cu_fist_DNA-bd_dom"/>
</dbReference>
<dbReference type="InterPro" id="IPR036395">
    <property type="entry name" value="Cu_fist_DNA-bd_dom_sf"/>
</dbReference>
<dbReference type="PANTHER" id="PTHR28088">
    <property type="entry name" value="TRANSCRIPTIONAL ACTIVATOR HAA1-RELATED"/>
    <property type="match status" value="1"/>
</dbReference>
<dbReference type="PANTHER" id="PTHR28088:SF5">
    <property type="entry name" value="TRANSCRIPTIONAL ACTIVATOR HAA1-RELATED"/>
    <property type="match status" value="1"/>
</dbReference>
<dbReference type="Pfam" id="PF00649">
    <property type="entry name" value="Copper-fist"/>
    <property type="match status" value="1"/>
</dbReference>
<dbReference type="PRINTS" id="PR00617">
    <property type="entry name" value="COPPERFIST"/>
</dbReference>
<dbReference type="SMART" id="SM01090">
    <property type="entry name" value="Copper-fist"/>
    <property type="match status" value="1"/>
</dbReference>
<dbReference type="SMART" id="SM00412">
    <property type="entry name" value="Cu_FIST"/>
    <property type="match status" value="1"/>
</dbReference>
<dbReference type="SUPFAM" id="SSF57879">
    <property type="entry name" value="Zinc domain conserved in yeast copper-regulated transcription factors"/>
    <property type="match status" value="1"/>
</dbReference>
<dbReference type="PROSITE" id="PS01119">
    <property type="entry name" value="COPPER_FIST_1"/>
    <property type="match status" value="1"/>
</dbReference>
<dbReference type="PROSITE" id="PS50073">
    <property type="entry name" value="COPPER_FIST_2"/>
    <property type="match status" value="1"/>
</dbReference>
<keyword id="KW-0010">Activator</keyword>
<keyword id="KW-0186">Copper</keyword>
<keyword id="KW-0238">DNA-binding</keyword>
<keyword id="KW-0479">Metal-binding</keyword>
<keyword id="KW-0539">Nucleus</keyword>
<keyword id="KW-0597">Phosphoprotein</keyword>
<keyword id="KW-1185">Reference proteome</keyword>
<keyword id="KW-0804">Transcription</keyword>
<keyword id="KW-0805">Transcription regulation</keyword>
<keyword id="KW-0862">Zinc</keyword>
<sequence length="694" mass="76671">MVLINGIKYACERCIRGHRVTTCNHTDQPLMMIKPKGRPSTTCDYCKQLRKNKNANPEGVCTCGRLEKKKLAQKAKEEARAKAKEKQRKQCTCGTDEVCKYHAQKRHLRKSPSSSQKKGRSISRSQPMFERVLSSTSLDSNMLSGHGALSDTSSILTSTFLDSEPGVGKISKDYHHVPSLASISSLQSSQSLDQNFSIPQSPPLSSMSFNFLTGNINETNQNHSNHQHSKSGNNWQDSSVSLPAKADSRLNMMDKNNSVGLDLLGHSKRISPISNSRVGEVSVPLEEYIPSDIDGVGRVTDKSSLVYDWPFDESIERNFSTTATAATGESKFDINDNCNRINSKSYSKTNSMNGNGMNNSNNNNINSNGNDKNNNNSSRQEHQGNGLFDMFTDSSSISTLSRANLLLQEKIGSQENSVKQENYSKNPQLRHQLTSRSRSFIHHPANEYLKNTFGNSHSNDIGKGVEVLSLTPSFMDIPEKERETERSPSSNYITDRPFTRKPRSSSIDVNHRYPPMAPTTVATSPGALNNAVASNLDDQLSLTSLNSQPSSIANMMMDPSNLAEQSSIHSVPQSINSPRMPKTGSRQDKNIHTKKEERNPLNNIHDLSQLENVPDEMNQMFSPPLKSMNRPDAIRENSSSSNFIIQGNSMISTPSGRNDLPDTSPMSSIQTASPPSQLLTDQGFADLDNFMSSL</sequence>
<reference key="1">
    <citation type="journal article" date="1997" name="Nature">
        <title>The nucleotide sequence of Saccharomyces cerevisiae chromosome XVI.</title>
        <authorList>
            <person name="Bussey H."/>
            <person name="Storms R.K."/>
            <person name="Ahmed A."/>
            <person name="Albermann K."/>
            <person name="Allen E."/>
            <person name="Ansorge W."/>
            <person name="Araujo R."/>
            <person name="Aparicio A."/>
            <person name="Barrell B.G."/>
            <person name="Badcock K."/>
            <person name="Benes V."/>
            <person name="Botstein D."/>
            <person name="Bowman S."/>
            <person name="Brueckner M."/>
            <person name="Carpenter J."/>
            <person name="Cherry J.M."/>
            <person name="Chung E."/>
            <person name="Churcher C.M."/>
            <person name="Coster F."/>
            <person name="Davis K."/>
            <person name="Davis R.W."/>
            <person name="Dietrich F.S."/>
            <person name="Delius H."/>
            <person name="DiPaolo T."/>
            <person name="Dubois E."/>
            <person name="Duesterhoeft A."/>
            <person name="Duncan M."/>
            <person name="Floeth M."/>
            <person name="Fortin N."/>
            <person name="Friesen J.D."/>
            <person name="Fritz C."/>
            <person name="Goffeau A."/>
            <person name="Hall J."/>
            <person name="Hebling U."/>
            <person name="Heumann K."/>
            <person name="Hilbert H."/>
            <person name="Hillier L.W."/>
            <person name="Hunicke-Smith S."/>
            <person name="Hyman R.W."/>
            <person name="Johnston M."/>
            <person name="Kalman S."/>
            <person name="Kleine K."/>
            <person name="Komp C."/>
            <person name="Kurdi O."/>
            <person name="Lashkari D."/>
            <person name="Lew H."/>
            <person name="Lin A."/>
            <person name="Lin D."/>
            <person name="Louis E.J."/>
            <person name="Marathe R."/>
            <person name="Messenguy F."/>
            <person name="Mewes H.-W."/>
            <person name="Mirtipati S."/>
            <person name="Moestl D."/>
            <person name="Mueller-Auer S."/>
            <person name="Namath A."/>
            <person name="Nentwich U."/>
            <person name="Oefner P."/>
            <person name="Pearson D."/>
            <person name="Petel F.X."/>
            <person name="Pohl T.M."/>
            <person name="Purnelle B."/>
            <person name="Rajandream M.A."/>
            <person name="Rechmann S."/>
            <person name="Rieger M."/>
            <person name="Riles L."/>
            <person name="Roberts D."/>
            <person name="Schaefer M."/>
            <person name="Scharfe M."/>
            <person name="Scherens B."/>
            <person name="Schramm S."/>
            <person name="Schroeder M."/>
            <person name="Sdicu A.-M."/>
            <person name="Tettelin H."/>
            <person name="Urrestarazu L.A."/>
            <person name="Ushinsky S."/>
            <person name="Vierendeels F."/>
            <person name="Vissers S."/>
            <person name="Voss H."/>
            <person name="Walsh S.V."/>
            <person name="Wambutt R."/>
            <person name="Wang Y."/>
            <person name="Wedler E."/>
            <person name="Wedler H."/>
            <person name="Winnett E."/>
            <person name="Zhong W.-W."/>
            <person name="Zollner A."/>
            <person name="Vo D.H."/>
            <person name="Hani J."/>
        </authorList>
    </citation>
    <scope>NUCLEOTIDE SEQUENCE [LARGE SCALE GENOMIC DNA]</scope>
    <source>
        <strain>ATCC 204508 / S288c</strain>
    </source>
</reference>
<reference key="2">
    <citation type="journal article" date="2014" name="G3 (Bethesda)">
        <title>The reference genome sequence of Saccharomyces cerevisiae: Then and now.</title>
        <authorList>
            <person name="Engel S.R."/>
            <person name="Dietrich F.S."/>
            <person name="Fisk D.G."/>
            <person name="Binkley G."/>
            <person name="Balakrishnan R."/>
            <person name="Costanzo M.C."/>
            <person name="Dwight S.S."/>
            <person name="Hitz B.C."/>
            <person name="Karra K."/>
            <person name="Nash R.S."/>
            <person name="Weng S."/>
            <person name="Wong E.D."/>
            <person name="Lloyd P."/>
            <person name="Skrzypek M.S."/>
            <person name="Miyasato S.R."/>
            <person name="Simison M."/>
            <person name="Cherry J.M."/>
        </authorList>
    </citation>
    <scope>GENOME REANNOTATION</scope>
    <source>
        <strain>ATCC 204508 / S288c</strain>
    </source>
</reference>
<reference key="3">
    <citation type="journal article" date="2007" name="Genome Res.">
        <title>Approaching a complete repository of sequence-verified protein-encoding clones for Saccharomyces cerevisiae.</title>
        <authorList>
            <person name="Hu Y."/>
            <person name="Rolfs A."/>
            <person name="Bhullar B."/>
            <person name="Murthy T.V.S."/>
            <person name="Zhu C."/>
            <person name="Berger M.F."/>
            <person name="Camargo A.A."/>
            <person name="Kelley F."/>
            <person name="McCarron S."/>
            <person name="Jepson D."/>
            <person name="Richardson A."/>
            <person name="Raphael J."/>
            <person name="Moreira D."/>
            <person name="Taycher E."/>
            <person name="Zuo D."/>
            <person name="Mohr S."/>
            <person name="Kane M.F."/>
            <person name="Williamson J."/>
            <person name="Simpson A.J.G."/>
            <person name="Bulyk M.L."/>
            <person name="Harlow E."/>
            <person name="Marsischky G."/>
            <person name="Kolodner R.D."/>
            <person name="LaBaer J."/>
        </authorList>
    </citation>
    <scope>NUCLEOTIDE SEQUENCE [GENOMIC DNA]</scope>
    <source>
        <strain>ATCC 204508 / S288c</strain>
    </source>
</reference>
<reference key="4">
    <citation type="journal article" date="2001" name="J. Biol. Chem.">
        <title>Haa1, a protein homologous to the copper-regulated transcription factor ace1, is a novel transcriptional activator.</title>
        <authorList>
            <person name="Keller G."/>
            <person name="Ray E."/>
            <person name="Brown P.O."/>
            <person name="Winge D.R."/>
        </authorList>
    </citation>
    <scope>FUNCTION</scope>
    <scope>SUBCELLULAR LOCATION</scope>
</reference>
<reference key="5">
    <citation type="journal article" date="2003" name="Nature">
        <title>Global analysis of protein expression in yeast.</title>
        <authorList>
            <person name="Ghaemmaghami S."/>
            <person name="Huh W.-K."/>
            <person name="Bower K."/>
            <person name="Howson R.W."/>
            <person name="Belle A."/>
            <person name="Dephoure N."/>
            <person name="O'Shea E.K."/>
            <person name="Weissman J.S."/>
        </authorList>
    </citation>
    <scope>LEVEL OF PROTEIN EXPRESSION [LARGE SCALE ANALYSIS]</scope>
</reference>
<reference key="6">
    <citation type="journal article" date="2005" name="Mol. Cell. Proteomics">
        <title>Quantitative phosphoproteomics applied to the yeast pheromone signaling pathway.</title>
        <authorList>
            <person name="Gruhler A."/>
            <person name="Olsen J.V."/>
            <person name="Mohammed S."/>
            <person name="Mortensen P."/>
            <person name="Faergeman N.J."/>
            <person name="Mann M."/>
            <person name="Jensen O.N."/>
        </authorList>
    </citation>
    <scope>PHOSPHORYLATION [LARGE SCALE ANALYSIS] AT SER-241</scope>
    <scope>IDENTIFICATION BY MASS SPECTROMETRY [LARGE SCALE ANALYSIS]</scope>
    <source>
        <strain>YAL6B</strain>
    </source>
</reference>
<reference key="7">
    <citation type="journal article" date="2007" name="J. Proteome Res.">
        <title>Large-scale phosphorylation analysis of alpha-factor-arrested Saccharomyces cerevisiae.</title>
        <authorList>
            <person name="Li X."/>
            <person name="Gerber S.A."/>
            <person name="Rudner A.D."/>
            <person name="Beausoleil S.A."/>
            <person name="Haas W."/>
            <person name="Villen J."/>
            <person name="Elias J.E."/>
            <person name="Gygi S.P."/>
        </authorList>
    </citation>
    <scope>IDENTIFICATION BY MASS SPECTROMETRY [LARGE SCALE ANALYSIS]</scope>
    <source>
        <strain>ADR376</strain>
    </source>
</reference>
<reference key="8">
    <citation type="journal article" date="2008" name="Mol. Cell. Proteomics">
        <title>A multidimensional chromatography technology for in-depth phosphoproteome analysis.</title>
        <authorList>
            <person name="Albuquerque C.P."/>
            <person name="Smolka M.B."/>
            <person name="Payne S.H."/>
            <person name="Bafna V."/>
            <person name="Eng J."/>
            <person name="Zhou H."/>
        </authorList>
    </citation>
    <scope>PHOSPHORYLATION [LARGE SCALE ANALYSIS] AT SER-125 AND SER-241</scope>
    <scope>IDENTIFICATION BY MASS SPECTROMETRY [LARGE SCALE ANALYSIS]</scope>
</reference>
<reference key="9">
    <citation type="journal article" date="2009" name="Science">
        <title>Global analysis of Cdk1 substrate phosphorylation sites provides insights into evolution.</title>
        <authorList>
            <person name="Holt L.J."/>
            <person name="Tuch B.B."/>
            <person name="Villen J."/>
            <person name="Johnson A.D."/>
            <person name="Gygi S.P."/>
            <person name="Morgan D.O."/>
        </authorList>
    </citation>
    <scope>PHOSPHORYLATION [LARGE SCALE ANALYSIS] AT SER-231 AND SER-291</scope>
    <scope>IDENTIFICATION BY MASS SPECTROMETRY [LARGE SCALE ANALYSIS]</scope>
</reference>
<reference key="10">
    <citation type="journal article" date="2012" name="Proc. Natl. Acad. Sci. U.S.A.">
        <title>N-terminal acetylome analyses and functional insights of the N-terminal acetyltransferase NatB.</title>
        <authorList>
            <person name="Van Damme P."/>
            <person name="Lasa M."/>
            <person name="Polevoda B."/>
            <person name="Gazquez C."/>
            <person name="Elosegui-Artola A."/>
            <person name="Kim D.S."/>
            <person name="De Juan-Pardo E."/>
            <person name="Demeyer K."/>
            <person name="Hole K."/>
            <person name="Larrea E."/>
            <person name="Timmerman E."/>
            <person name="Prieto J."/>
            <person name="Arnesen T."/>
            <person name="Sherman F."/>
            <person name="Gevaert K."/>
            <person name="Aldabe R."/>
        </authorList>
    </citation>
    <scope>IDENTIFICATION BY MASS SPECTROMETRY [LARGE SCALE ANALYSIS]</scope>
</reference>
<name>HAA1_YEAST</name>